<feature type="chain" id="PRO_0000291551" description="Spliceosome-associated protein CWC15 homolog" evidence="4">
    <location>
        <begin position="1"/>
        <end position="230"/>
    </location>
</feature>
<feature type="region of interest" description="Disordered" evidence="3">
    <location>
        <begin position="1"/>
        <end position="157"/>
    </location>
</feature>
<feature type="region of interest" description="Disordered" evidence="3">
    <location>
        <begin position="164"/>
        <end position="183"/>
    </location>
</feature>
<feature type="coiled-coil region" evidence="2">
    <location>
        <begin position="47"/>
        <end position="82"/>
    </location>
</feature>
<feature type="coiled-coil region" evidence="2">
    <location>
        <begin position="119"/>
        <end position="164"/>
    </location>
</feature>
<feature type="compositionally biased region" description="Polar residues" evidence="3">
    <location>
        <begin position="25"/>
        <end position="34"/>
    </location>
</feature>
<feature type="compositionally biased region" description="Basic and acidic residues" evidence="3">
    <location>
        <begin position="52"/>
        <end position="78"/>
    </location>
</feature>
<feature type="compositionally biased region" description="Acidic residues" evidence="3">
    <location>
        <begin position="104"/>
        <end position="125"/>
    </location>
</feature>
<feature type="compositionally biased region" description="Basic and acidic residues" evidence="3">
    <location>
        <begin position="131"/>
        <end position="157"/>
    </location>
</feature>
<reference key="1">
    <citation type="journal article" date="1998" name="Science">
        <title>Genome sequence of the nematode C. elegans: a platform for investigating biology.</title>
        <authorList>
            <consortium name="The C. elegans sequencing consortium"/>
        </authorList>
    </citation>
    <scope>NUCLEOTIDE SEQUENCE [LARGE SCALE GENOMIC DNA]</scope>
    <source>
        <strain>Bristol N2</strain>
    </source>
</reference>
<organism>
    <name type="scientific">Caenorhabditis elegans</name>
    <dbReference type="NCBI Taxonomy" id="6239"/>
    <lineage>
        <taxon>Eukaryota</taxon>
        <taxon>Metazoa</taxon>
        <taxon>Ecdysozoa</taxon>
        <taxon>Nematoda</taxon>
        <taxon>Chromadorea</taxon>
        <taxon>Rhabditida</taxon>
        <taxon>Rhabditina</taxon>
        <taxon>Rhabditomorpha</taxon>
        <taxon>Rhabditoidea</taxon>
        <taxon>Rhabditidae</taxon>
        <taxon>Peloderinae</taxon>
        <taxon>Caenorhabditis</taxon>
    </lineage>
</organism>
<accession>O45766</accession>
<sequence length="230" mass="26105">MTTAHRPTFHPARGGTARGEGDLSKLSNQYSSKDMPSHTKMKYRQTGQETEADLRKKDLRRELEDKERNAIREKRARDSASSSSSHSKRQRMDQIAAESAASVDADEAVDELNSSDDDDSDEDDTAALMAELEKIKKERAEEKAARDEEIKEKEEKQRMENILAGNPLLNDTPAGSSTSGGDFTVKRRWDDDVVFKNCAKGVEERKKEVTFINDAIRSEFHKKFMDKYIK</sequence>
<keyword id="KW-0002">3D-structure</keyword>
<keyword id="KW-0175">Coiled coil</keyword>
<keyword id="KW-0507">mRNA processing</keyword>
<keyword id="KW-0508">mRNA splicing</keyword>
<keyword id="KW-0539">Nucleus</keyword>
<keyword id="KW-1185">Reference proteome</keyword>
<keyword id="KW-0747">Spliceosome</keyword>
<gene>
    <name evidence="5" type="primary">cwc-15</name>
    <name evidence="5" type="ORF">T10C6.5</name>
</gene>
<comment type="function">
    <text evidence="1">Component of a spliceosomal complex that is required for activating pre-mRNA splicing.</text>
</comment>
<comment type="subunit">
    <text evidence="1">Component of spliceosomal complex.</text>
</comment>
<comment type="subcellular location">
    <subcellularLocation>
        <location evidence="1">Nucleus</location>
    </subcellularLocation>
</comment>
<comment type="similarity">
    <text evidence="4">Belongs to the CWC15 family.</text>
</comment>
<name>CWC15_CAEEL</name>
<evidence type="ECO:0000250" key="1">
    <source>
        <dbReference type="UniProtKB" id="Q9P013"/>
    </source>
</evidence>
<evidence type="ECO:0000255" key="2"/>
<evidence type="ECO:0000256" key="3">
    <source>
        <dbReference type="SAM" id="MobiDB-lite"/>
    </source>
</evidence>
<evidence type="ECO:0000305" key="4"/>
<evidence type="ECO:0000312" key="5">
    <source>
        <dbReference type="WormBase" id="T10C6.5"/>
    </source>
</evidence>
<proteinExistence type="evidence at protein level"/>
<dbReference type="EMBL" id="Z93388">
    <property type="protein sequence ID" value="CAB07655.1"/>
    <property type="molecule type" value="Genomic_DNA"/>
</dbReference>
<dbReference type="PIR" id="T24789">
    <property type="entry name" value="T24789"/>
</dbReference>
<dbReference type="RefSeq" id="NP_507024.1">
    <property type="nucleotide sequence ID" value="NM_074623.7"/>
</dbReference>
<dbReference type="PDB" id="8RO0">
    <property type="method" value="EM"/>
    <property type="resolution" value="2.90 A"/>
    <property type="chains" value="P=1-230"/>
</dbReference>
<dbReference type="PDB" id="8RO1">
    <property type="method" value="EM"/>
    <property type="resolution" value="3.00 A"/>
    <property type="chains" value="P=1-230"/>
</dbReference>
<dbReference type="PDBsum" id="8RO0"/>
<dbReference type="PDBsum" id="8RO1"/>
<dbReference type="EMDB" id="EMD-19397"/>
<dbReference type="EMDB" id="EMD-19398"/>
<dbReference type="SMR" id="O45766"/>
<dbReference type="BioGRID" id="45060">
    <property type="interactions" value="6"/>
</dbReference>
<dbReference type="DIP" id="DIP-26099N"/>
<dbReference type="FunCoup" id="O45766">
    <property type="interactions" value="3145"/>
</dbReference>
<dbReference type="IntAct" id="O45766">
    <property type="interactions" value="2"/>
</dbReference>
<dbReference type="STRING" id="6239.T10C6.5.1"/>
<dbReference type="PaxDb" id="6239-T10C6.5"/>
<dbReference type="PeptideAtlas" id="O45766"/>
<dbReference type="EnsemblMetazoa" id="T10C6.5.1">
    <property type="protein sequence ID" value="T10C6.5.1"/>
    <property type="gene ID" value="WBGene00011687"/>
</dbReference>
<dbReference type="GeneID" id="180069"/>
<dbReference type="KEGG" id="cel:CELE_T10C6.5"/>
<dbReference type="UCSC" id="T10C6.5">
    <property type="organism name" value="c. elegans"/>
</dbReference>
<dbReference type="AGR" id="WB:WBGene00011687"/>
<dbReference type="CTD" id="180069"/>
<dbReference type="WormBase" id="T10C6.5">
    <property type="protein sequence ID" value="CE16380"/>
    <property type="gene ID" value="WBGene00011687"/>
    <property type="gene designation" value="cwc-15"/>
</dbReference>
<dbReference type="eggNOG" id="KOG3228">
    <property type="taxonomic scope" value="Eukaryota"/>
</dbReference>
<dbReference type="GeneTree" id="ENSGT00390000012084"/>
<dbReference type="HOGENOM" id="CLU_068312_0_1_1"/>
<dbReference type="InParanoid" id="O45766"/>
<dbReference type="OMA" id="KYREHGQ"/>
<dbReference type="OrthoDB" id="30179at2759"/>
<dbReference type="PhylomeDB" id="O45766"/>
<dbReference type="Reactome" id="R-CEL-72163">
    <property type="pathway name" value="mRNA Splicing - Major Pathway"/>
</dbReference>
<dbReference type="PRO" id="PR:O45766"/>
<dbReference type="Proteomes" id="UP000001940">
    <property type="component" value="Chromosome V"/>
</dbReference>
<dbReference type="Bgee" id="WBGene00011687">
    <property type="expression patterns" value="Expressed in embryo and 4 other cell types or tissues"/>
</dbReference>
<dbReference type="GO" id="GO:0071013">
    <property type="term" value="C:catalytic step 2 spliceosome"/>
    <property type="evidence" value="ECO:0000318"/>
    <property type="project" value="GO_Central"/>
</dbReference>
<dbReference type="GO" id="GO:0005634">
    <property type="term" value="C:nucleus"/>
    <property type="evidence" value="ECO:0007005"/>
    <property type="project" value="WormBase"/>
</dbReference>
<dbReference type="GO" id="GO:0003723">
    <property type="term" value="F:RNA binding"/>
    <property type="evidence" value="ECO:0000250"/>
    <property type="project" value="UniProtKB"/>
</dbReference>
<dbReference type="GO" id="GO:0045292">
    <property type="term" value="P:mRNA cis splicing, via spliceosome"/>
    <property type="evidence" value="ECO:0000318"/>
    <property type="project" value="GO_Central"/>
</dbReference>
<dbReference type="GO" id="GO:0000398">
    <property type="term" value="P:mRNA splicing, via spliceosome"/>
    <property type="evidence" value="ECO:0000250"/>
    <property type="project" value="UniProtKB"/>
</dbReference>
<dbReference type="InterPro" id="IPR006973">
    <property type="entry name" value="Cwf_Cwc_15"/>
</dbReference>
<dbReference type="PANTHER" id="PTHR12718">
    <property type="entry name" value="CELL CYCLE CONTROL PROTEIN CWF15"/>
    <property type="match status" value="1"/>
</dbReference>
<dbReference type="PANTHER" id="PTHR12718:SF2">
    <property type="entry name" value="SPLICEOSOME-ASSOCIATED PROTEIN CWC15 HOMOLOG"/>
    <property type="match status" value="1"/>
</dbReference>
<dbReference type="Pfam" id="PF04889">
    <property type="entry name" value="Cwf_Cwc_15"/>
    <property type="match status" value="1"/>
</dbReference>
<protein>
    <recommendedName>
        <fullName evidence="4">Spliceosome-associated protein CWC15 homolog</fullName>
    </recommendedName>
</protein>